<evidence type="ECO:0000250" key="1"/>
<evidence type="ECO:0000255" key="2"/>
<evidence type="ECO:0000305" key="3"/>
<dbReference type="EMBL" id="BX571857">
    <property type="protein sequence ID" value="CAG42436.1"/>
    <property type="molecule type" value="Genomic_DNA"/>
</dbReference>
<dbReference type="RefSeq" id="WP_001041277.1">
    <property type="nucleotide sequence ID" value="NC_002953.3"/>
</dbReference>
<dbReference type="SMR" id="Q6GBD5"/>
<dbReference type="KEGG" id="sas:SAS0660"/>
<dbReference type="HOGENOM" id="CLU_001265_10_11_9"/>
<dbReference type="GO" id="GO:0005886">
    <property type="term" value="C:plasma membrane"/>
    <property type="evidence" value="ECO:0007669"/>
    <property type="project" value="UniProtKB-SubCell"/>
</dbReference>
<dbReference type="GO" id="GO:0042910">
    <property type="term" value="F:xenobiotic transmembrane transporter activity"/>
    <property type="evidence" value="ECO:0007669"/>
    <property type="project" value="InterPro"/>
</dbReference>
<dbReference type="CDD" id="cd17325">
    <property type="entry name" value="MFS_MdtG_SLC18_like"/>
    <property type="match status" value="1"/>
</dbReference>
<dbReference type="Gene3D" id="1.20.1250.20">
    <property type="entry name" value="MFS general substrate transporter like domains"/>
    <property type="match status" value="1"/>
</dbReference>
<dbReference type="InterPro" id="IPR011701">
    <property type="entry name" value="MFS"/>
</dbReference>
<dbReference type="InterPro" id="IPR020846">
    <property type="entry name" value="MFS_dom"/>
</dbReference>
<dbReference type="InterPro" id="IPR050189">
    <property type="entry name" value="MFS_Efflux_Transporters"/>
</dbReference>
<dbReference type="InterPro" id="IPR036259">
    <property type="entry name" value="MFS_trans_sf"/>
</dbReference>
<dbReference type="InterPro" id="IPR004734">
    <property type="entry name" value="Multidrug-R"/>
</dbReference>
<dbReference type="InterPro" id="IPR001958">
    <property type="entry name" value="Tet-R_TetA/multi-R_MdtG-like"/>
</dbReference>
<dbReference type="NCBIfam" id="TIGR00880">
    <property type="entry name" value="2_A_01_02"/>
    <property type="match status" value="1"/>
</dbReference>
<dbReference type="PANTHER" id="PTHR43124:SF3">
    <property type="entry name" value="CHLORAMPHENICOL EFFLUX PUMP RV0191"/>
    <property type="match status" value="1"/>
</dbReference>
<dbReference type="PANTHER" id="PTHR43124">
    <property type="entry name" value="PURINE EFFLUX PUMP PBUE"/>
    <property type="match status" value="1"/>
</dbReference>
<dbReference type="Pfam" id="PF07690">
    <property type="entry name" value="MFS_1"/>
    <property type="match status" value="1"/>
</dbReference>
<dbReference type="PRINTS" id="PR01035">
    <property type="entry name" value="TCRTETA"/>
</dbReference>
<dbReference type="SUPFAM" id="SSF103473">
    <property type="entry name" value="MFS general substrate transporter"/>
    <property type="match status" value="1"/>
</dbReference>
<dbReference type="PROSITE" id="PS50850">
    <property type="entry name" value="MFS"/>
    <property type="match status" value="1"/>
</dbReference>
<reference key="1">
    <citation type="journal article" date="2004" name="Proc. Natl. Acad. Sci. U.S.A.">
        <title>Complete genomes of two clinical Staphylococcus aureus strains: evidence for the rapid evolution of virulence and drug resistance.</title>
        <authorList>
            <person name="Holden M.T.G."/>
            <person name="Feil E.J."/>
            <person name="Lindsay J.A."/>
            <person name="Peacock S.J."/>
            <person name="Day N.P.J."/>
            <person name="Enright M.C."/>
            <person name="Foster T.J."/>
            <person name="Moore C.E."/>
            <person name="Hurst L."/>
            <person name="Atkin R."/>
            <person name="Barron A."/>
            <person name="Bason N."/>
            <person name="Bentley S.D."/>
            <person name="Chillingworth C."/>
            <person name="Chillingworth T."/>
            <person name="Churcher C."/>
            <person name="Clark L."/>
            <person name="Corton C."/>
            <person name="Cronin A."/>
            <person name="Doggett J."/>
            <person name="Dowd L."/>
            <person name="Feltwell T."/>
            <person name="Hance Z."/>
            <person name="Harris B."/>
            <person name="Hauser H."/>
            <person name="Holroyd S."/>
            <person name="Jagels K."/>
            <person name="James K.D."/>
            <person name="Lennard N."/>
            <person name="Line A."/>
            <person name="Mayes R."/>
            <person name="Moule S."/>
            <person name="Mungall K."/>
            <person name="Ormond D."/>
            <person name="Quail M.A."/>
            <person name="Rabbinowitsch E."/>
            <person name="Rutherford K.M."/>
            <person name="Sanders M."/>
            <person name="Sharp S."/>
            <person name="Simmonds M."/>
            <person name="Stevens K."/>
            <person name="Whitehead S."/>
            <person name="Barrell B.G."/>
            <person name="Spratt B.G."/>
            <person name="Parkhill J."/>
        </authorList>
    </citation>
    <scope>NUCLEOTIDE SEQUENCE [LARGE SCALE GENOMIC DNA]</scope>
    <source>
        <strain>MSSA476</strain>
    </source>
</reference>
<keyword id="KW-1003">Cell membrane</keyword>
<keyword id="KW-0472">Membrane</keyword>
<keyword id="KW-0812">Transmembrane</keyword>
<keyword id="KW-1133">Transmembrane helix</keyword>
<keyword id="KW-0813">Transport</keyword>
<proteinExistence type="inferred from homology"/>
<comment type="function">
    <text evidence="1">Involved in quinolone resistance. May constitute a membrane-associated active efflux pump of hydrophilic quinolones (By similarity).</text>
</comment>
<comment type="subcellular location">
    <subcellularLocation>
        <location evidence="3">Cell membrane</location>
        <topology evidence="3">Multi-pass membrane protein</topology>
    </subcellularLocation>
</comment>
<comment type="similarity">
    <text evidence="3">Belongs to the major facilitator superfamily. TCR/Tet family.</text>
</comment>
<protein>
    <recommendedName>
        <fullName>Quinolone resistance protein NorA</fullName>
    </recommendedName>
</protein>
<gene>
    <name type="primary">norA</name>
    <name type="ordered locus">SAS0660</name>
</gene>
<accession>Q6GBD5</accession>
<feature type="chain" id="PRO_0000173372" description="Quinolone resistance protein NorA">
    <location>
        <begin position="1"/>
        <end position="388"/>
    </location>
</feature>
<feature type="transmembrane region" description="Helical" evidence="2">
    <location>
        <begin position="5"/>
        <end position="25"/>
    </location>
</feature>
<feature type="transmembrane region" description="Helical" evidence="2">
    <location>
        <begin position="42"/>
        <end position="62"/>
    </location>
</feature>
<feature type="transmembrane region" description="Helical" evidence="2">
    <location>
        <begin position="69"/>
        <end position="89"/>
    </location>
</feature>
<feature type="transmembrane region" description="Helical" evidence="2">
    <location>
        <begin position="99"/>
        <end position="119"/>
    </location>
</feature>
<feature type="transmembrane region" description="Helical" evidence="2">
    <location>
        <begin position="129"/>
        <end position="149"/>
    </location>
</feature>
<feature type="transmembrane region" description="Helical" evidence="2">
    <location>
        <begin position="157"/>
        <end position="177"/>
    </location>
</feature>
<feature type="transmembrane region" description="Helical" evidence="2">
    <location>
        <begin position="201"/>
        <end position="221"/>
    </location>
</feature>
<feature type="transmembrane region" description="Helical" evidence="2">
    <location>
        <begin position="239"/>
        <end position="259"/>
    </location>
</feature>
<feature type="transmembrane region" description="Helical" evidence="2">
    <location>
        <begin position="269"/>
        <end position="289"/>
    </location>
</feature>
<feature type="transmembrane region" description="Helical" evidence="2">
    <location>
        <begin position="293"/>
        <end position="313"/>
    </location>
</feature>
<feature type="transmembrane region" description="Helical" evidence="2">
    <location>
        <begin position="331"/>
        <end position="351"/>
    </location>
</feature>
<feature type="transmembrane region" description="Helical" evidence="2">
    <location>
        <begin position="355"/>
        <end position="375"/>
    </location>
</feature>
<sequence length="388" mass="42231">MNKQIFVLYFNIFLIFLGIGLVIPVLPVYLKDLGLTGSDLGLLVAAFALSQMIISPFGGTLADKLGKKLIICIGLILFSVSEFMFAVGHNFSVLMLSRVIGGMSAGMVMPGVTGLIADISPSHQKAKNFGYMSAIINSGFILGPGIGGFMAEVSHRMPFYFAGALGILAFIMSIVLIHDPKKSTTSGFQKLEPQLLTKINWKVFITPVILTLVLSLGLSAFETLYSLYTADKVNYSPKDISIAITGGGIFGALFQIYFFDKFMKYFSELTFIAWSLLYSVVVLILLVFANGYWSIMLISFVVFIGFDMIRPAITNYFSNIAGERQGFAGGLNSTFTSMGNFIGPLIAGALFDVHIEAPIYMAIGVSLAGVVIVLIEKQHRAKLKEQNM</sequence>
<organism>
    <name type="scientific">Staphylococcus aureus (strain MSSA476)</name>
    <dbReference type="NCBI Taxonomy" id="282459"/>
    <lineage>
        <taxon>Bacteria</taxon>
        <taxon>Bacillati</taxon>
        <taxon>Bacillota</taxon>
        <taxon>Bacilli</taxon>
        <taxon>Bacillales</taxon>
        <taxon>Staphylococcaceae</taxon>
        <taxon>Staphylococcus</taxon>
    </lineage>
</organism>
<name>NORA_STAAS</name>